<dbReference type="EC" id="5.4.3.8" evidence="1"/>
<dbReference type="EMBL" id="BX950851">
    <property type="protein sequence ID" value="CAG76205.1"/>
    <property type="molecule type" value="Genomic_DNA"/>
</dbReference>
<dbReference type="RefSeq" id="WP_011094823.1">
    <property type="nucleotide sequence ID" value="NC_004547.2"/>
</dbReference>
<dbReference type="SMR" id="Q6D1Z0"/>
<dbReference type="STRING" id="218491.ECA3307"/>
<dbReference type="KEGG" id="eca:ECA3307"/>
<dbReference type="PATRIC" id="fig|218491.5.peg.3357"/>
<dbReference type="eggNOG" id="COG0001">
    <property type="taxonomic scope" value="Bacteria"/>
</dbReference>
<dbReference type="HOGENOM" id="CLU_016922_1_5_6"/>
<dbReference type="OrthoDB" id="9801052at2"/>
<dbReference type="UniPathway" id="UPA00251">
    <property type="reaction ID" value="UER00317"/>
</dbReference>
<dbReference type="Proteomes" id="UP000007966">
    <property type="component" value="Chromosome"/>
</dbReference>
<dbReference type="GO" id="GO:0005737">
    <property type="term" value="C:cytoplasm"/>
    <property type="evidence" value="ECO:0007669"/>
    <property type="project" value="UniProtKB-SubCell"/>
</dbReference>
<dbReference type="GO" id="GO:0042286">
    <property type="term" value="F:glutamate-1-semialdehyde 2,1-aminomutase activity"/>
    <property type="evidence" value="ECO:0007669"/>
    <property type="project" value="UniProtKB-UniRule"/>
</dbReference>
<dbReference type="GO" id="GO:0030170">
    <property type="term" value="F:pyridoxal phosphate binding"/>
    <property type="evidence" value="ECO:0007669"/>
    <property type="project" value="InterPro"/>
</dbReference>
<dbReference type="GO" id="GO:0008483">
    <property type="term" value="F:transaminase activity"/>
    <property type="evidence" value="ECO:0007669"/>
    <property type="project" value="InterPro"/>
</dbReference>
<dbReference type="GO" id="GO:0006782">
    <property type="term" value="P:protoporphyrinogen IX biosynthetic process"/>
    <property type="evidence" value="ECO:0007669"/>
    <property type="project" value="UniProtKB-UniRule"/>
</dbReference>
<dbReference type="CDD" id="cd00610">
    <property type="entry name" value="OAT_like"/>
    <property type="match status" value="1"/>
</dbReference>
<dbReference type="FunFam" id="3.40.640.10:FF:000021">
    <property type="entry name" value="Glutamate-1-semialdehyde 2,1-aminomutase"/>
    <property type="match status" value="1"/>
</dbReference>
<dbReference type="FunFam" id="3.90.1150.10:FF:000012">
    <property type="entry name" value="Glutamate-1-semialdehyde 2,1-aminomutase"/>
    <property type="match status" value="1"/>
</dbReference>
<dbReference type="Gene3D" id="3.90.1150.10">
    <property type="entry name" value="Aspartate Aminotransferase, domain 1"/>
    <property type="match status" value="1"/>
</dbReference>
<dbReference type="Gene3D" id="3.40.640.10">
    <property type="entry name" value="Type I PLP-dependent aspartate aminotransferase-like (Major domain)"/>
    <property type="match status" value="1"/>
</dbReference>
<dbReference type="HAMAP" id="MF_00375">
    <property type="entry name" value="HemL_aminotrans_3"/>
    <property type="match status" value="1"/>
</dbReference>
<dbReference type="InterPro" id="IPR004639">
    <property type="entry name" value="4pyrrol_synth_GluAld_NH2Trfase"/>
</dbReference>
<dbReference type="InterPro" id="IPR005814">
    <property type="entry name" value="Aminotrans_3"/>
</dbReference>
<dbReference type="InterPro" id="IPR049704">
    <property type="entry name" value="Aminotrans_3_PPA_site"/>
</dbReference>
<dbReference type="InterPro" id="IPR015424">
    <property type="entry name" value="PyrdxlP-dep_Trfase"/>
</dbReference>
<dbReference type="InterPro" id="IPR015421">
    <property type="entry name" value="PyrdxlP-dep_Trfase_major"/>
</dbReference>
<dbReference type="InterPro" id="IPR015422">
    <property type="entry name" value="PyrdxlP-dep_Trfase_small"/>
</dbReference>
<dbReference type="NCBIfam" id="TIGR00713">
    <property type="entry name" value="hemL"/>
    <property type="match status" value="1"/>
</dbReference>
<dbReference type="NCBIfam" id="NF000818">
    <property type="entry name" value="PRK00062.1"/>
    <property type="match status" value="1"/>
</dbReference>
<dbReference type="PANTHER" id="PTHR43713">
    <property type="entry name" value="GLUTAMATE-1-SEMIALDEHYDE 2,1-AMINOMUTASE"/>
    <property type="match status" value="1"/>
</dbReference>
<dbReference type="PANTHER" id="PTHR43713:SF3">
    <property type="entry name" value="GLUTAMATE-1-SEMIALDEHYDE 2,1-AMINOMUTASE 1, CHLOROPLASTIC-RELATED"/>
    <property type="match status" value="1"/>
</dbReference>
<dbReference type="Pfam" id="PF00202">
    <property type="entry name" value="Aminotran_3"/>
    <property type="match status" value="1"/>
</dbReference>
<dbReference type="SUPFAM" id="SSF53383">
    <property type="entry name" value="PLP-dependent transferases"/>
    <property type="match status" value="1"/>
</dbReference>
<dbReference type="PROSITE" id="PS00600">
    <property type="entry name" value="AA_TRANSFER_CLASS_3"/>
    <property type="match status" value="1"/>
</dbReference>
<protein>
    <recommendedName>
        <fullName evidence="1">Glutamate-1-semialdehyde 2,1-aminomutase</fullName>
        <shortName evidence="1">GSA</shortName>
        <ecNumber evidence="1">5.4.3.8</ecNumber>
    </recommendedName>
    <alternativeName>
        <fullName evidence="1">Glutamate-1-semialdehyde aminotransferase</fullName>
        <shortName evidence="1">GSA-AT</shortName>
    </alternativeName>
</protein>
<sequence>MNKSESLYAAAQQLIPGGVNSPVRAFNGVGGTPLFIERADGAYLYDVDEQAYIDYVGSWGPMVLGHNHPSIRDAVIAAAERGLSFGAPTEMEVQMARLVTSLVPSMDMVRMVNSGTEATMSAIRLARGYTGRDKIIKFEGCYHGHADCLLVKAGSGALTLGQPNSPGVPADFARHTLTCVYNDLSSVRTTFEQYPDEIAAIIVEPVAGNMNCVPPLPDFLPGLRALCDEFGALFIIDEVMTGFRVALAGAQSHYGVVPDLTCLGKIIGGGMPVGAFGGKREVMQALAPTGPVYQAGTLSGNPIAMAAGFACLTEVAKPGVHEKLTALTNQLADGLLAAAKAENIPLVVNQAGGMFGLFFTDAESVTCYQDVMKCDVERFKRFFHMMLEEGIYLAPSAFEAGFMSLAHTPQDIERTIEAAQICFSRL</sequence>
<proteinExistence type="inferred from homology"/>
<organism>
    <name type="scientific">Pectobacterium atrosepticum (strain SCRI 1043 / ATCC BAA-672)</name>
    <name type="common">Erwinia carotovora subsp. atroseptica</name>
    <dbReference type="NCBI Taxonomy" id="218491"/>
    <lineage>
        <taxon>Bacteria</taxon>
        <taxon>Pseudomonadati</taxon>
        <taxon>Pseudomonadota</taxon>
        <taxon>Gammaproteobacteria</taxon>
        <taxon>Enterobacterales</taxon>
        <taxon>Pectobacteriaceae</taxon>
        <taxon>Pectobacterium</taxon>
    </lineage>
</organism>
<reference key="1">
    <citation type="journal article" date="2004" name="Proc. Natl. Acad. Sci. U.S.A.">
        <title>Genome sequence of the enterobacterial phytopathogen Erwinia carotovora subsp. atroseptica and characterization of virulence factors.</title>
        <authorList>
            <person name="Bell K.S."/>
            <person name="Sebaihia M."/>
            <person name="Pritchard L."/>
            <person name="Holden M.T.G."/>
            <person name="Hyman L.J."/>
            <person name="Holeva M.C."/>
            <person name="Thomson N.R."/>
            <person name="Bentley S.D."/>
            <person name="Churcher L.J.C."/>
            <person name="Mungall K."/>
            <person name="Atkin R."/>
            <person name="Bason N."/>
            <person name="Brooks K."/>
            <person name="Chillingworth T."/>
            <person name="Clark K."/>
            <person name="Doggett J."/>
            <person name="Fraser A."/>
            <person name="Hance Z."/>
            <person name="Hauser H."/>
            <person name="Jagels K."/>
            <person name="Moule S."/>
            <person name="Norbertczak H."/>
            <person name="Ormond D."/>
            <person name="Price C."/>
            <person name="Quail M.A."/>
            <person name="Sanders M."/>
            <person name="Walker D."/>
            <person name="Whitehead S."/>
            <person name="Salmond G.P.C."/>
            <person name="Birch P.R.J."/>
            <person name="Parkhill J."/>
            <person name="Toth I.K."/>
        </authorList>
    </citation>
    <scope>NUCLEOTIDE SEQUENCE [LARGE SCALE GENOMIC DNA]</scope>
    <source>
        <strain>SCRI 1043 / ATCC BAA-672</strain>
    </source>
</reference>
<accession>Q6D1Z0</accession>
<comment type="catalytic activity">
    <reaction evidence="1">
        <text>(S)-4-amino-5-oxopentanoate = 5-aminolevulinate</text>
        <dbReference type="Rhea" id="RHEA:14265"/>
        <dbReference type="ChEBI" id="CHEBI:57501"/>
        <dbReference type="ChEBI" id="CHEBI:356416"/>
        <dbReference type="EC" id="5.4.3.8"/>
    </reaction>
</comment>
<comment type="cofactor">
    <cofactor evidence="1">
        <name>pyridoxal 5'-phosphate</name>
        <dbReference type="ChEBI" id="CHEBI:597326"/>
    </cofactor>
</comment>
<comment type="pathway">
    <text evidence="1">Porphyrin-containing compound metabolism; protoporphyrin-IX biosynthesis; 5-aminolevulinate from L-glutamyl-tRNA(Glu): step 2/2.</text>
</comment>
<comment type="subunit">
    <text evidence="1">Homodimer.</text>
</comment>
<comment type="subcellular location">
    <subcellularLocation>
        <location evidence="1">Cytoplasm</location>
    </subcellularLocation>
</comment>
<comment type="similarity">
    <text evidence="1">Belongs to the class-III pyridoxal-phosphate-dependent aminotransferase family. HemL subfamily.</text>
</comment>
<feature type="chain" id="PRO_0000120411" description="Glutamate-1-semialdehyde 2,1-aminomutase">
    <location>
        <begin position="1"/>
        <end position="426"/>
    </location>
</feature>
<feature type="modified residue" description="N6-(pyridoxal phosphate)lysine" evidence="1">
    <location>
        <position position="265"/>
    </location>
</feature>
<gene>
    <name evidence="1" type="primary">hemL</name>
    <name type="ordered locus">ECA3307</name>
</gene>
<keyword id="KW-0963">Cytoplasm</keyword>
<keyword id="KW-0413">Isomerase</keyword>
<keyword id="KW-0627">Porphyrin biosynthesis</keyword>
<keyword id="KW-0663">Pyridoxal phosphate</keyword>
<keyword id="KW-1185">Reference proteome</keyword>
<evidence type="ECO:0000255" key="1">
    <source>
        <dbReference type="HAMAP-Rule" id="MF_00375"/>
    </source>
</evidence>
<name>GSA_PECAS</name>